<evidence type="ECO:0000250" key="1">
    <source>
        <dbReference type="UniProtKB" id="Q96AG3"/>
    </source>
</evidence>
<evidence type="ECO:0000255" key="2"/>
<evidence type="ECO:0000256" key="3">
    <source>
        <dbReference type="SAM" id="MobiDB-lite"/>
    </source>
</evidence>
<evidence type="ECO:0000305" key="4"/>
<feature type="chain" id="PRO_0000291835" description="Solute carrier family 25 member 46">
    <location>
        <begin position="1"/>
        <end position="416"/>
    </location>
</feature>
<feature type="transmembrane region" description="Helical; Name=1" evidence="2">
    <location>
        <begin position="101"/>
        <end position="121"/>
    </location>
</feature>
<feature type="transmembrane region" description="Helical; Name=2" evidence="2">
    <location>
        <begin position="161"/>
        <end position="181"/>
    </location>
</feature>
<feature type="transmembrane region" description="Helical; Name=3" evidence="2">
    <location>
        <begin position="197"/>
        <end position="217"/>
    </location>
</feature>
<feature type="transmembrane region" description="Helical; Name=4" evidence="2">
    <location>
        <begin position="256"/>
        <end position="276"/>
    </location>
</feature>
<feature type="transmembrane region" description="Helical; Name=5" evidence="2">
    <location>
        <begin position="312"/>
        <end position="332"/>
    </location>
</feature>
<feature type="transmembrane region" description="Helical; Name=6" evidence="2">
    <location>
        <begin position="381"/>
        <end position="401"/>
    </location>
</feature>
<feature type="repeat" description="Solcar 1">
    <location>
        <begin position="94"/>
        <end position="185"/>
    </location>
</feature>
<feature type="repeat" description="Solcar 2">
    <location>
        <begin position="309"/>
        <end position="414"/>
    </location>
</feature>
<feature type="region of interest" description="Disordered" evidence="3">
    <location>
        <begin position="1"/>
        <end position="91"/>
    </location>
</feature>
<feature type="compositionally biased region" description="Basic and acidic residues" evidence="3">
    <location>
        <begin position="1"/>
        <end position="13"/>
    </location>
</feature>
<feature type="compositionally biased region" description="Polar residues" evidence="3">
    <location>
        <begin position="37"/>
        <end position="49"/>
    </location>
</feature>
<feature type="compositionally biased region" description="Low complexity" evidence="3">
    <location>
        <begin position="82"/>
        <end position="91"/>
    </location>
</feature>
<feature type="sequence conflict" description="In Ref. 1; CAJ81828." evidence="4" ref="1">
    <original>R</original>
    <variation>C</variation>
    <location>
        <position position="59"/>
    </location>
</feature>
<keyword id="KW-0472">Membrane</keyword>
<keyword id="KW-0496">Mitochondrion</keyword>
<keyword id="KW-1000">Mitochondrion outer membrane</keyword>
<keyword id="KW-1185">Reference proteome</keyword>
<keyword id="KW-0677">Repeat</keyword>
<keyword id="KW-0812">Transmembrane</keyword>
<keyword id="KW-1133">Transmembrane helix</keyword>
<keyword id="KW-0813">Transport</keyword>
<comment type="function">
    <text evidence="1">May play a role in mitochondrial dynamics by controlling mitochondrial membrane fission.</text>
</comment>
<comment type="subcellular location">
    <subcellularLocation>
        <location evidence="1">Mitochondrion outer membrane</location>
        <topology evidence="2">Multi-pass membrane protein</topology>
    </subcellularLocation>
</comment>
<comment type="similarity">
    <text evidence="4">Belongs to the mitochondrial carrier (TC 2.A.29) family.</text>
</comment>
<comment type="sequence caution" evidence="4">
    <conflict type="erroneous initiation">
        <sequence resource="EMBL-CDS" id="CAJ81828"/>
    </conflict>
</comment>
<gene>
    <name type="primary">slc25a46</name>
    <name type="ORF">TEgg014d12.1</name>
</gene>
<proteinExistence type="evidence at transcript level"/>
<name>S2546_XENTR</name>
<accession>A4IIC3</accession>
<accession>Q28FB7</accession>
<dbReference type="EMBL" id="CR762049">
    <property type="protein sequence ID" value="CAJ81828.1"/>
    <property type="status" value="ALT_INIT"/>
    <property type="molecule type" value="mRNA"/>
</dbReference>
<dbReference type="EMBL" id="BC135960">
    <property type="protein sequence ID" value="AAI35961.1"/>
    <property type="molecule type" value="mRNA"/>
</dbReference>
<dbReference type="RefSeq" id="NP_001016130.1">
    <property type="nucleotide sequence ID" value="NM_001016130.2"/>
</dbReference>
<dbReference type="FunCoup" id="A4IIC3">
    <property type="interactions" value="1837"/>
</dbReference>
<dbReference type="STRING" id="8364.ENSXETP00000039649"/>
<dbReference type="PaxDb" id="8364-ENSXETP00000058845"/>
<dbReference type="DNASU" id="548884"/>
<dbReference type="GeneID" id="548884"/>
<dbReference type="KEGG" id="xtr:548884"/>
<dbReference type="CTD" id="91137"/>
<dbReference type="eggNOG" id="KOG2954">
    <property type="taxonomic scope" value="Eukaryota"/>
</dbReference>
<dbReference type="HOGENOM" id="CLU_047010_0_0_1"/>
<dbReference type="InParanoid" id="A4IIC3"/>
<dbReference type="OrthoDB" id="2403262at2759"/>
<dbReference type="Proteomes" id="UP000008143">
    <property type="component" value="Chromosome 1"/>
</dbReference>
<dbReference type="GO" id="GO:0005741">
    <property type="term" value="C:mitochondrial outer membrane"/>
    <property type="evidence" value="ECO:0000250"/>
    <property type="project" value="UniProtKB"/>
</dbReference>
<dbReference type="GO" id="GO:0000266">
    <property type="term" value="P:mitochondrial fission"/>
    <property type="evidence" value="ECO:0000250"/>
    <property type="project" value="UniProtKB"/>
</dbReference>
<dbReference type="GO" id="GO:0090149">
    <property type="term" value="P:mitochondrial membrane fission"/>
    <property type="evidence" value="ECO:0007669"/>
    <property type="project" value="InterPro"/>
</dbReference>
<dbReference type="FunFam" id="1.50.40.10:FF:000057">
    <property type="entry name" value="Solute carrier family 25 member 46"/>
    <property type="match status" value="1"/>
</dbReference>
<dbReference type="Gene3D" id="1.50.40.10">
    <property type="entry name" value="Mitochondrial carrier domain"/>
    <property type="match status" value="2"/>
</dbReference>
<dbReference type="InterPro" id="IPR018108">
    <property type="entry name" value="Mitochondrial_sb/sol_carrier"/>
</dbReference>
<dbReference type="InterPro" id="IPR023395">
    <property type="entry name" value="Mt_carrier_dom_sf"/>
</dbReference>
<dbReference type="InterPro" id="IPR039158">
    <property type="entry name" value="SLC25A46"/>
</dbReference>
<dbReference type="PANTHER" id="PTHR21252:SF2">
    <property type="entry name" value="MITOCHONDRIAL OUTER MEMBRANE PROTEIN SLC25A46"/>
    <property type="match status" value="1"/>
</dbReference>
<dbReference type="PANTHER" id="PTHR21252">
    <property type="entry name" value="TB1 PROTEIN-RELATED"/>
    <property type="match status" value="1"/>
</dbReference>
<dbReference type="Pfam" id="PF00153">
    <property type="entry name" value="Mito_carr"/>
    <property type="match status" value="2"/>
</dbReference>
<dbReference type="SUPFAM" id="SSF103506">
    <property type="entry name" value="Mitochondrial carrier"/>
    <property type="match status" value="1"/>
</dbReference>
<dbReference type="PROSITE" id="PS50920">
    <property type="entry name" value="SOLCAR"/>
    <property type="match status" value="2"/>
</dbReference>
<sequence length="416" mass="45834">MQPRRPDRFDGLEYRGTSWGRGDGDVPPYQHGFPARSFSSSGDLSQHWVTTPPDIPGSRNLHWGEKSPQYGADSNAGPAAVGEESSSSSSGGEHLNRFAGFGIGLASLFTENVLAHPCIVLRRQCQVNYHARNYQLSPFSIVNIMYSFTKTQGFRALWKGMGSTFIVQGISLGAEGMLSEFTHLPRELNHKWNPKQIGGHLLLKGLVYVIVTPFYSASLIETVQSEIIHDNPGILDCLKEGIGRVLNLGVPYSKRLLPLLVLTFPTVLHGILHYIISSTIQKCVLFFIKKKSPAQLPGDGSNAVQNKLEDYFPELIANFAASLCADVLLYPLETVLHRLHIQGTRTIIDNTDLGHEVVPINSQYEGLKDCINTIKREEGGLGFYKGFGAVVVQYTLHAIVLQITKIIYSSVVQTAS</sequence>
<reference key="1">
    <citation type="submission" date="2006-10" db="EMBL/GenBank/DDBJ databases">
        <authorList>
            <consortium name="Sanger Xenopus tropicalis EST/cDNA project"/>
        </authorList>
    </citation>
    <scope>NUCLEOTIDE SEQUENCE [LARGE SCALE MRNA]</scope>
    <source>
        <tissue>Egg</tissue>
    </source>
</reference>
<reference key="2">
    <citation type="submission" date="2007-03" db="EMBL/GenBank/DDBJ databases">
        <authorList>
            <consortium name="NIH - Xenopus Gene Collection (XGC) project"/>
        </authorList>
    </citation>
    <scope>NUCLEOTIDE SEQUENCE [LARGE SCALE MRNA]</scope>
    <source>
        <tissue>Embryo</tissue>
    </source>
</reference>
<protein>
    <recommendedName>
        <fullName>Solute carrier family 25 member 46</fullName>
    </recommendedName>
</protein>
<organism>
    <name type="scientific">Xenopus tropicalis</name>
    <name type="common">Western clawed frog</name>
    <name type="synonym">Silurana tropicalis</name>
    <dbReference type="NCBI Taxonomy" id="8364"/>
    <lineage>
        <taxon>Eukaryota</taxon>
        <taxon>Metazoa</taxon>
        <taxon>Chordata</taxon>
        <taxon>Craniata</taxon>
        <taxon>Vertebrata</taxon>
        <taxon>Euteleostomi</taxon>
        <taxon>Amphibia</taxon>
        <taxon>Batrachia</taxon>
        <taxon>Anura</taxon>
        <taxon>Pipoidea</taxon>
        <taxon>Pipidae</taxon>
        <taxon>Xenopodinae</taxon>
        <taxon>Xenopus</taxon>
        <taxon>Silurana</taxon>
    </lineage>
</organism>